<organism>
    <name type="scientific">Desulfatibacillum aliphaticivorans</name>
    <dbReference type="NCBI Taxonomy" id="218208"/>
    <lineage>
        <taxon>Bacteria</taxon>
        <taxon>Pseudomonadati</taxon>
        <taxon>Thermodesulfobacteriota</taxon>
        <taxon>Desulfobacteria</taxon>
        <taxon>Desulfobacterales</taxon>
        <taxon>Desulfatibacillaceae</taxon>
        <taxon>Desulfatibacillum</taxon>
    </lineage>
</organism>
<keyword id="KW-0028">Amino-acid biosynthesis</keyword>
<keyword id="KW-0057">Aromatic amino acid biosynthesis</keyword>
<keyword id="KW-0328">Glycosyltransferase</keyword>
<keyword id="KW-0460">Magnesium</keyword>
<keyword id="KW-0479">Metal-binding</keyword>
<keyword id="KW-1185">Reference proteome</keyword>
<keyword id="KW-0808">Transferase</keyword>
<keyword id="KW-0822">Tryptophan biosynthesis</keyword>
<evidence type="ECO:0000255" key="1">
    <source>
        <dbReference type="HAMAP-Rule" id="MF_00211"/>
    </source>
</evidence>
<gene>
    <name evidence="1" type="primary">trpD</name>
    <name type="ordered locus">Dalk_1437</name>
</gene>
<name>TRPD_DESAL</name>
<feature type="chain" id="PRO_1000198819" description="Anthranilate phosphoribosyltransferase">
    <location>
        <begin position="1"/>
        <end position="338"/>
    </location>
</feature>
<feature type="binding site" evidence="1">
    <location>
        <position position="80"/>
    </location>
    <ligand>
        <name>5-phospho-alpha-D-ribose 1-diphosphate</name>
        <dbReference type="ChEBI" id="CHEBI:58017"/>
    </ligand>
</feature>
<feature type="binding site" evidence="1">
    <location>
        <position position="80"/>
    </location>
    <ligand>
        <name>anthranilate</name>
        <dbReference type="ChEBI" id="CHEBI:16567"/>
        <label>1</label>
    </ligand>
</feature>
<feature type="binding site" evidence="1">
    <location>
        <begin position="83"/>
        <end position="84"/>
    </location>
    <ligand>
        <name>5-phospho-alpha-D-ribose 1-diphosphate</name>
        <dbReference type="ChEBI" id="CHEBI:58017"/>
    </ligand>
</feature>
<feature type="binding site" evidence="1">
    <location>
        <position position="88"/>
    </location>
    <ligand>
        <name>5-phospho-alpha-D-ribose 1-diphosphate</name>
        <dbReference type="ChEBI" id="CHEBI:58017"/>
    </ligand>
</feature>
<feature type="binding site" evidence="1">
    <location>
        <begin position="90"/>
        <end position="93"/>
    </location>
    <ligand>
        <name>5-phospho-alpha-D-ribose 1-diphosphate</name>
        <dbReference type="ChEBI" id="CHEBI:58017"/>
    </ligand>
</feature>
<feature type="binding site" evidence="1">
    <location>
        <position position="92"/>
    </location>
    <ligand>
        <name>Mg(2+)</name>
        <dbReference type="ChEBI" id="CHEBI:18420"/>
        <label>1</label>
    </ligand>
</feature>
<feature type="binding site" evidence="1">
    <location>
        <begin position="108"/>
        <end position="116"/>
    </location>
    <ligand>
        <name>5-phospho-alpha-D-ribose 1-diphosphate</name>
        <dbReference type="ChEBI" id="CHEBI:58017"/>
    </ligand>
</feature>
<feature type="binding site" evidence="1">
    <location>
        <position position="111"/>
    </location>
    <ligand>
        <name>anthranilate</name>
        <dbReference type="ChEBI" id="CHEBI:16567"/>
        <label>1</label>
    </ligand>
</feature>
<feature type="binding site" evidence="1">
    <location>
        <position position="120"/>
    </location>
    <ligand>
        <name>5-phospho-alpha-D-ribose 1-diphosphate</name>
        <dbReference type="ChEBI" id="CHEBI:58017"/>
    </ligand>
</feature>
<feature type="binding site" evidence="1">
    <location>
        <position position="166"/>
    </location>
    <ligand>
        <name>anthranilate</name>
        <dbReference type="ChEBI" id="CHEBI:16567"/>
        <label>2</label>
    </ligand>
</feature>
<feature type="binding site" evidence="1">
    <location>
        <position position="225"/>
    </location>
    <ligand>
        <name>Mg(2+)</name>
        <dbReference type="ChEBI" id="CHEBI:18420"/>
        <label>2</label>
    </ligand>
</feature>
<feature type="binding site" evidence="1">
    <location>
        <position position="226"/>
    </location>
    <ligand>
        <name>Mg(2+)</name>
        <dbReference type="ChEBI" id="CHEBI:18420"/>
        <label>1</label>
    </ligand>
</feature>
<feature type="binding site" evidence="1">
    <location>
        <position position="226"/>
    </location>
    <ligand>
        <name>Mg(2+)</name>
        <dbReference type="ChEBI" id="CHEBI:18420"/>
        <label>2</label>
    </ligand>
</feature>
<comment type="function">
    <text evidence="1">Catalyzes the transfer of the phosphoribosyl group of 5-phosphorylribose-1-pyrophosphate (PRPP) to anthranilate to yield N-(5'-phosphoribosyl)-anthranilate (PRA).</text>
</comment>
<comment type="catalytic activity">
    <reaction evidence="1">
        <text>N-(5-phospho-beta-D-ribosyl)anthranilate + diphosphate = 5-phospho-alpha-D-ribose 1-diphosphate + anthranilate</text>
        <dbReference type="Rhea" id="RHEA:11768"/>
        <dbReference type="ChEBI" id="CHEBI:16567"/>
        <dbReference type="ChEBI" id="CHEBI:18277"/>
        <dbReference type="ChEBI" id="CHEBI:33019"/>
        <dbReference type="ChEBI" id="CHEBI:58017"/>
        <dbReference type="EC" id="2.4.2.18"/>
    </reaction>
</comment>
<comment type="cofactor">
    <cofactor evidence="1">
        <name>Mg(2+)</name>
        <dbReference type="ChEBI" id="CHEBI:18420"/>
    </cofactor>
    <text evidence="1">Binds 2 magnesium ions per monomer.</text>
</comment>
<comment type="pathway">
    <text evidence="1">Amino-acid biosynthesis; L-tryptophan biosynthesis; L-tryptophan from chorismate: step 2/5.</text>
</comment>
<comment type="subunit">
    <text evidence="1">Homodimer.</text>
</comment>
<comment type="similarity">
    <text evidence="1">Belongs to the anthranilate phosphoribosyltransferase family.</text>
</comment>
<dbReference type="EC" id="2.4.2.18" evidence="1"/>
<dbReference type="EMBL" id="CP001322">
    <property type="protein sequence ID" value="ACL03137.1"/>
    <property type="molecule type" value="Genomic_DNA"/>
</dbReference>
<dbReference type="RefSeq" id="WP_012610572.1">
    <property type="nucleotide sequence ID" value="NC_011768.1"/>
</dbReference>
<dbReference type="SMR" id="B8FA41"/>
<dbReference type="KEGG" id="dal:Dalk_1437"/>
<dbReference type="eggNOG" id="COG0547">
    <property type="taxonomic scope" value="Bacteria"/>
</dbReference>
<dbReference type="HOGENOM" id="CLU_034315_2_1_7"/>
<dbReference type="UniPathway" id="UPA00035">
    <property type="reaction ID" value="UER00041"/>
</dbReference>
<dbReference type="Proteomes" id="UP000000739">
    <property type="component" value="Chromosome"/>
</dbReference>
<dbReference type="GO" id="GO:0005829">
    <property type="term" value="C:cytosol"/>
    <property type="evidence" value="ECO:0007669"/>
    <property type="project" value="TreeGrafter"/>
</dbReference>
<dbReference type="GO" id="GO:0004048">
    <property type="term" value="F:anthranilate phosphoribosyltransferase activity"/>
    <property type="evidence" value="ECO:0007669"/>
    <property type="project" value="UniProtKB-UniRule"/>
</dbReference>
<dbReference type="GO" id="GO:0000287">
    <property type="term" value="F:magnesium ion binding"/>
    <property type="evidence" value="ECO:0007669"/>
    <property type="project" value="UniProtKB-UniRule"/>
</dbReference>
<dbReference type="GO" id="GO:0000162">
    <property type="term" value="P:L-tryptophan biosynthetic process"/>
    <property type="evidence" value="ECO:0007669"/>
    <property type="project" value="UniProtKB-UniRule"/>
</dbReference>
<dbReference type="FunFam" id="3.40.1030.10:FF:000002">
    <property type="entry name" value="Anthranilate phosphoribosyltransferase"/>
    <property type="match status" value="1"/>
</dbReference>
<dbReference type="Gene3D" id="3.40.1030.10">
    <property type="entry name" value="Nucleoside phosphorylase/phosphoribosyltransferase catalytic domain"/>
    <property type="match status" value="1"/>
</dbReference>
<dbReference type="Gene3D" id="1.20.970.10">
    <property type="entry name" value="Transferase, Pyrimidine Nucleoside Phosphorylase, Chain C"/>
    <property type="match status" value="1"/>
</dbReference>
<dbReference type="HAMAP" id="MF_00211">
    <property type="entry name" value="TrpD"/>
    <property type="match status" value="1"/>
</dbReference>
<dbReference type="InterPro" id="IPR005940">
    <property type="entry name" value="Anthranilate_Pribosyl_Tfrase"/>
</dbReference>
<dbReference type="InterPro" id="IPR000312">
    <property type="entry name" value="Glycosyl_Trfase_fam3"/>
</dbReference>
<dbReference type="InterPro" id="IPR017459">
    <property type="entry name" value="Glycosyl_Trfase_fam3_N_dom"/>
</dbReference>
<dbReference type="InterPro" id="IPR036320">
    <property type="entry name" value="Glycosyl_Trfase_fam3_N_dom_sf"/>
</dbReference>
<dbReference type="InterPro" id="IPR035902">
    <property type="entry name" value="Nuc_phospho_transferase"/>
</dbReference>
<dbReference type="NCBIfam" id="TIGR01245">
    <property type="entry name" value="trpD"/>
    <property type="match status" value="1"/>
</dbReference>
<dbReference type="PANTHER" id="PTHR43285">
    <property type="entry name" value="ANTHRANILATE PHOSPHORIBOSYLTRANSFERASE"/>
    <property type="match status" value="1"/>
</dbReference>
<dbReference type="PANTHER" id="PTHR43285:SF2">
    <property type="entry name" value="ANTHRANILATE PHOSPHORIBOSYLTRANSFERASE"/>
    <property type="match status" value="1"/>
</dbReference>
<dbReference type="Pfam" id="PF02885">
    <property type="entry name" value="Glycos_trans_3N"/>
    <property type="match status" value="1"/>
</dbReference>
<dbReference type="Pfam" id="PF00591">
    <property type="entry name" value="Glycos_transf_3"/>
    <property type="match status" value="1"/>
</dbReference>
<dbReference type="SUPFAM" id="SSF52418">
    <property type="entry name" value="Nucleoside phosphorylase/phosphoribosyltransferase catalytic domain"/>
    <property type="match status" value="1"/>
</dbReference>
<dbReference type="SUPFAM" id="SSF47648">
    <property type="entry name" value="Nucleoside phosphorylase/phosphoribosyltransferase N-terminal domain"/>
    <property type="match status" value="1"/>
</dbReference>
<protein>
    <recommendedName>
        <fullName evidence="1">Anthranilate phosphoribosyltransferase</fullName>
        <ecNumber evidence="1">2.4.2.18</ecNumber>
    </recommendedName>
</protein>
<reference key="1">
    <citation type="journal article" date="2012" name="Environ. Microbiol.">
        <title>The genome sequence of Desulfatibacillum alkenivorans AK-01: a blueprint for anaerobic alkane oxidation.</title>
        <authorList>
            <person name="Callaghan A.V."/>
            <person name="Morris B.E."/>
            <person name="Pereira I.A."/>
            <person name="McInerney M.J."/>
            <person name="Austin R.N."/>
            <person name="Groves J.T."/>
            <person name="Kukor J.J."/>
            <person name="Suflita J.M."/>
            <person name="Young L.Y."/>
            <person name="Zylstra G.J."/>
            <person name="Wawrik B."/>
        </authorList>
    </citation>
    <scope>NUCLEOTIDE SEQUENCE [LARGE SCALE GENOMIC DNA]</scope>
    <source>
        <strain>AK-01</strain>
    </source>
</reference>
<accession>B8FA41</accession>
<sequence length="338" mass="35189">MFSELLKKIVSGQDLAEDETTTMMDAIMSGEVEVPAIAAFMAALATKGETFTELAGAARSMRRKATRIQVSSNTVVDTCGTGGDGASTFNISTTSAFVVAGCGVTVAKHGNRSVSSKCGSADVLEALGVKLDTHPEVVEQGIEEIGIGFLFAPMYHSAMRFAMPARQAVGIRSIFNMLGPLTNPAGANCQLLGVYDPKLTEMFAEALKLLGARKAYVVHGHDGLDEISICAPTRVSELAEGMVRTFDILPEQLNIEACDISELAGGDAEENAGITKSILEGTPGPKQDVVVVNAGAALVAAGVAEDFKDGMAKAKEAIQSGAALGKLEALVKFTQENG</sequence>
<proteinExistence type="inferred from homology"/>